<gene>
    <name evidence="1" type="primary">azoR</name>
    <name type="ordered locus">XOO1993</name>
</gene>
<reference key="1">
    <citation type="journal article" date="2005" name="Jpn. Agric. Res. Q.">
        <title>Genome sequence of Xanthomonas oryzae pv. oryzae suggests contribution of large numbers of effector genes and insertion sequences to its race diversity.</title>
        <authorList>
            <person name="Ochiai H."/>
            <person name="Inoue Y."/>
            <person name="Takeya M."/>
            <person name="Sasaki A."/>
            <person name="Kaku H."/>
        </authorList>
    </citation>
    <scope>NUCLEOTIDE SEQUENCE [LARGE SCALE GENOMIC DNA]</scope>
    <source>
        <strain>MAFF 311018</strain>
    </source>
</reference>
<sequence>MKLLHLDSSALGATSISRELSAAIVAQQRRLYPEVEVTYRDLDRDPIPHLTAQTLAQTDPAEAAAAEAVMQQFLQAEVIVIGAPMYNFAIPSTLKAWIDRIAVAGRTFHYTANGPEGLAGGKRLIIASARGGVYAEPSNDFQEPYLRQLFGFLGIDDITLVRAEGVAYSPQHRADALAAALAGLCAEQDAAVMA</sequence>
<keyword id="KW-0285">Flavoprotein</keyword>
<keyword id="KW-0288">FMN</keyword>
<keyword id="KW-0520">NAD</keyword>
<keyword id="KW-0560">Oxidoreductase</keyword>
<accession>Q2P3X9</accession>
<proteinExistence type="inferred from homology"/>
<comment type="function">
    <text evidence="1">Quinone reductase that provides resistance to thiol-specific stress caused by electrophilic quinones.</text>
</comment>
<comment type="function">
    <text evidence="1">Also exhibits azoreductase activity. Catalyzes the reductive cleavage of the azo bond in aromatic azo compounds to the corresponding amines.</text>
</comment>
<comment type="catalytic activity">
    <reaction evidence="1">
        <text>2 a quinone + NADH + H(+) = 2 a 1,4-benzosemiquinone + NAD(+)</text>
        <dbReference type="Rhea" id="RHEA:65952"/>
        <dbReference type="ChEBI" id="CHEBI:15378"/>
        <dbReference type="ChEBI" id="CHEBI:57540"/>
        <dbReference type="ChEBI" id="CHEBI:57945"/>
        <dbReference type="ChEBI" id="CHEBI:132124"/>
        <dbReference type="ChEBI" id="CHEBI:134225"/>
    </reaction>
</comment>
<comment type="catalytic activity">
    <reaction evidence="1">
        <text>N,N-dimethyl-1,4-phenylenediamine + anthranilate + 2 NAD(+) = 2-(4-dimethylaminophenyl)diazenylbenzoate + 2 NADH + 2 H(+)</text>
        <dbReference type="Rhea" id="RHEA:55872"/>
        <dbReference type="ChEBI" id="CHEBI:15378"/>
        <dbReference type="ChEBI" id="CHEBI:15783"/>
        <dbReference type="ChEBI" id="CHEBI:16567"/>
        <dbReference type="ChEBI" id="CHEBI:57540"/>
        <dbReference type="ChEBI" id="CHEBI:57945"/>
        <dbReference type="ChEBI" id="CHEBI:71579"/>
        <dbReference type="EC" id="1.7.1.17"/>
    </reaction>
</comment>
<comment type="cofactor">
    <cofactor evidence="1">
        <name>FMN</name>
        <dbReference type="ChEBI" id="CHEBI:58210"/>
    </cofactor>
    <text evidence="1">Binds 1 FMN per subunit.</text>
</comment>
<comment type="subunit">
    <text evidence="1">Homodimer.</text>
</comment>
<comment type="similarity">
    <text evidence="1">Belongs to the azoreductase type 1 family.</text>
</comment>
<feature type="chain" id="PRO_0000245987" description="FMN-dependent NADH:quinone oxidoreductase">
    <location>
        <begin position="1"/>
        <end position="194"/>
    </location>
</feature>
<feature type="binding site" evidence="1">
    <location>
        <position position="9"/>
    </location>
    <ligand>
        <name>FMN</name>
        <dbReference type="ChEBI" id="CHEBI:58210"/>
    </ligand>
</feature>
<feature type="binding site" evidence="1">
    <location>
        <begin position="15"/>
        <end position="17"/>
    </location>
    <ligand>
        <name>FMN</name>
        <dbReference type="ChEBI" id="CHEBI:58210"/>
    </ligand>
</feature>
<feature type="binding site" evidence="1">
    <location>
        <begin position="85"/>
        <end position="88"/>
    </location>
    <ligand>
        <name>FMN</name>
        <dbReference type="ChEBI" id="CHEBI:58210"/>
    </ligand>
</feature>
<protein>
    <recommendedName>
        <fullName evidence="1">FMN-dependent NADH:quinone oxidoreductase</fullName>
        <ecNumber evidence="1">1.6.5.-</ecNumber>
    </recommendedName>
    <alternativeName>
        <fullName evidence="1">Azo-dye reductase</fullName>
    </alternativeName>
    <alternativeName>
        <fullName evidence="1">FMN-dependent NADH-azo compound oxidoreductase</fullName>
    </alternativeName>
    <alternativeName>
        <fullName evidence="1">FMN-dependent NADH-azoreductase</fullName>
        <ecNumber evidence="1">1.7.1.17</ecNumber>
    </alternativeName>
</protein>
<name>AZOR_XANOM</name>
<evidence type="ECO:0000255" key="1">
    <source>
        <dbReference type="HAMAP-Rule" id="MF_01216"/>
    </source>
</evidence>
<organism>
    <name type="scientific">Xanthomonas oryzae pv. oryzae (strain MAFF 311018)</name>
    <dbReference type="NCBI Taxonomy" id="342109"/>
    <lineage>
        <taxon>Bacteria</taxon>
        <taxon>Pseudomonadati</taxon>
        <taxon>Pseudomonadota</taxon>
        <taxon>Gammaproteobacteria</taxon>
        <taxon>Lysobacterales</taxon>
        <taxon>Lysobacteraceae</taxon>
        <taxon>Xanthomonas</taxon>
    </lineage>
</organism>
<dbReference type="EC" id="1.6.5.-" evidence="1"/>
<dbReference type="EC" id="1.7.1.17" evidence="1"/>
<dbReference type="EMBL" id="AP008229">
    <property type="protein sequence ID" value="BAE68748.1"/>
    <property type="molecule type" value="Genomic_DNA"/>
</dbReference>
<dbReference type="RefSeq" id="WP_011408405.1">
    <property type="nucleotide sequence ID" value="NC_007705.1"/>
</dbReference>
<dbReference type="SMR" id="Q2P3X9"/>
<dbReference type="KEGG" id="xom:XOO1993"/>
<dbReference type="HOGENOM" id="CLU_088964_0_0_6"/>
<dbReference type="GO" id="GO:0009055">
    <property type="term" value="F:electron transfer activity"/>
    <property type="evidence" value="ECO:0007669"/>
    <property type="project" value="UniProtKB-UniRule"/>
</dbReference>
<dbReference type="GO" id="GO:0010181">
    <property type="term" value="F:FMN binding"/>
    <property type="evidence" value="ECO:0007669"/>
    <property type="project" value="UniProtKB-UniRule"/>
</dbReference>
<dbReference type="GO" id="GO:0016652">
    <property type="term" value="F:oxidoreductase activity, acting on NAD(P)H as acceptor"/>
    <property type="evidence" value="ECO:0007669"/>
    <property type="project" value="UniProtKB-UniRule"/>
</dbReference>
<dbReference type="GO" id="GO:0016655">
    <property type="term" value="F:oxidoreductase activity, acting on NAD(P)H, quinone or similar compound as acceptor"/>
    <property type="evidence" value="ECO:0007669"/>
    <property type="project" value="InterPro"/>
</dbReference>
<dbReference type="Gene3D" id="3.40.50.360">
    <property type="match status" value="1"/>
</dbReference>
<dbReference type="HAMAP" id="MF_01216">
    <property type="entry name" value="Azoreductase_type1"/>
    <property type="match status" value="1"/>
</dbReference>
<dbReference type="InterPro" id="IPR003680">
    <property type="entry name" value="Flavodoxin_fold"/>
</dbReference>
<dbReference type="InterPro" id="IPR029039">
    <property type="entry name" value="Flavoprotein-like_sf"/>
</dbReference>
<dbReference type="InterPro" id="IPR050104">
    <property type="entry name" value="FMN-dep_NADH:Q_OxRdtase_AzoR1"/>
</dbReference>
<dbReference type="InterPro" id="IPR023048">
    <property type="entry name" value="NADH:quinone_OxRdtase_FMN_depd"/>
</dbReference>
<dbReference type="PANTHER" id="PTHR43741">
    <property type="entry name" value="FMN-DEPENDENT NADH-AZOREDUCTASE 1"/>
    <property type="match status" value="1"/>
</dbReference>
<dbReference type="PANTHER" id="PTHR43741:SF4">
    <property type="entry name" value="FMN-DEPENDENT NADH:QUINONE OXIDOREDUCTASE"/>
    <property type="match status" value="1"/>
</dbReference>
<dbReference type="Pfam" id="PF02525">
    <property type="entry name" value="Flavodoxin_2"/>
    <property type="match status" value="1"/>
</dbReference>
<dbReference type="SUPFAM" id="SSF52218">
    <property type="entry name" value="Flavoproteins"/>
    <property type="match status" value="1"/>
</dbReference>